<organism>
    <name type="scientific">Staphylococcus aureus (strain MW2)</name>
    <dbReference type="NCBI Taxonomy" id="196620"/>
    <lineage>
        <taxon>Bacteria</taxon>
        <taxon>Bacillati</taxon>
        <taxon>Bacillota</taxon>
        <taxon>Bacilli</taxon>
        <taxon>Bacillales</taxon>
        <taxon>Staphylococcaceae</taxon>
        <taxon>Staphylococcus</taxon>
    </lineage>
</organism>
<keyword id="KW-0028">Amino-acid biosynthesis</keyword>
<keyword id="KW-0057">Aromatic amino acid biosynthesis</keyword>
<keyword id="KW-0963">Cytoplasm</keyword>
<keyword id="KW-0808">Transferase</keyword>
<feature type="chain" id="PRO_0000088296" description="3-phosphoshikimate 1-carboxyvinyltransferase">
    <location>
        <begin position="1"/>
        <end position="432"/>
    </location>
</feature>
<feature type="active site" description="Proton acceptor" evidence="1">
    <location>
        <position position="317"/>
    </location>
</feature>
<feature type="binding site" evidence="1">
    <location>
        <position position="23"/>
    </location>
    <ligand>
        <name>3-phosphoshikimate</name>
        <dbReference type="ChEBI" id="CHEBI:145989"/>
    </ligand>
</feature>
<feature type="binding site" evidence="1">
    <location>
        <position position="23"/>
    </location>
    <ligand>
        <name>phosphoenolpyruvate</name>
        <dbReference type="ChEBI" id="CHEBI:58702"/>
    </ligand>
</feature>
<feature type="binding site" evidence="1">
    <location>
        <position position="24"/>
    </location>
    <ligand>
        <name>3-phosphoshikimate</name>
        <dbReference type="ChEBI" id="CHEBI:145989"/>
    </ligand>
</feature>
<feature type="binding site" evidence="1">
    <location>
        <position position="28"/>
    </location>
    <ligand>
        <name>3-phosphoshikimate</name>
        <dbReference type="ChEBI" id="CHEBI:145989"/>
    </ligand>
</feature>
<feature type="binding site" evidence="1">
    <location>
        <position position="95"/>
    </location>
    <ligand>
        <name>phosphoenolpyruvate</name>
        <dbReference type="ChEBI" id="CHEBI:58702"/>
    </ligand>
</feature>
<feature type="binding site" evidence="1">
    <location>
        <position position="123"/>
    </location>
    <ligand>
        <name>phosphoenolpyruvate</name>
        <dbReference type="ChEBI" id="CHEBI:58702"/>
    </ligand>
</feature>
<feature type="binding site" evidence="1">
    <location>
        <position position="167"/>
    </location>
    <ligand>
        <name>3-phosphoshikimate</name>
        <dbReference type="ChEBI" id="CHEBI:145989"/>
    </ligand>
</feature>
<feature type="binding site" evidence="1">
    <location>
        <position position="169"/>
    </location>
    <ligand>
        <name>3-phosphoshikimate</name>
        <dbReference type="ChEBI" id="CHEBI:145989"/>
    </ligand>
</feature>
<feature type="binding site" evidence="1">
    <location>
        <position position="169"/>
    </location>
    <ligand>
        <name>phosphoenolpyruvate</name>
        <dbReference type="ChEBI" id="CHEBI:58702"/>
    </ligand>
</feature>
<feature type="binding site" evidence="1">
    <location>
        <position position="317"/>
    </location>
    <ligand>
        <name>3-phosphoshikimate</name>
        <dbReference type="ChEBI" id="CHEBI:145989"/>
    </ligand>
</feature>
<feature type="binding site" evidence="1">
    <location>
        <position position="344"/>
    </location>
    <ligand>
        <name>3-phosphoshikimate</name>
        <dbReference type="ChEBI" id="CHEBI:145989"/>
    </ligand>
</feature>
<feature type="binding site" evidence="1">
    <location>
        <position position="348"/>
    </location>
    <ligand>
        <name>phosphoenolpyruvate</name>
        <dbReference type="ChEBI" id="CHEBI:58702"/>
    </ligand>
</feature>
<feature type="binding site" evidence="1">
    <location>
        <position position="390"/>
    </location>
    <ligand>
        <name>phosphoenolpyruvate</name>
        <dbReference type="ChEBI" id="CHEBI:58702"/>
    </ligand>
</feature>
<comment type="function">
    <text evidence="1">Catalyzes the transfer of the enolpyruvyl moiety of phosphoenolpyruvate (PEP) to the 5-hydroxyl of shikimate-3-phosphate (S3P) to produce enolpyruvyl shikimate-3-phosphate and inorganic phosphate.</text>
</comment>
<comment type="catalytic activity">
    <reaction evidence="1">
        <text>3-phosphoshikimate + phosphoenolpyruvate = 5-O-(1-carboxyvinyl)-3-phosphoshikimate + phosphate</text>
        <dbReference type="Rhea" id="RHEA:21256"/>
        <dbReference type="ChEBI" id="CHEBI:43474"/>
        <dbReference type="ChEBI" id="CHEBI:57701"/>
        <dbReference type="ChEBI" id="CHEBI:58702"/>
        <dbReference type="ChEBI" id="CHEBI:145989"/>
        <dbReference type="EC" id="2.5.1.19"/>
    </reaction>
    <physiologicalReaction direction="left-to-right" evidence="1">
        <dbReference type="Rhea" id="RHEA:21257"/>
    </physiologicalReaction>
</comment>
<comment type="pathway">
    <text evidence="1">Metabolic intermediate biosynthesis; chorismate biosynthesis; chorismate from D-erythrose 4-phosphate and phosphoenolpyruvate: step 6/7.</text>
</comment>
<comment type="subunit">
    <text evidence="1">Monomer.</text>
</comment>
<comment type="subcellular location">
    <subcellularLocation>
        <location evidence="1">Cytoplasm</location>
    </subcellularLocation>
</comment>
<comment type="similarity">
    <text evidence="1">Belongs to the EPSP synthase family.</text>
</comment>
<dbReference type="EC" id="2.5.1.19" evidence="1"/>
<dbReference type="EMBL" id="BA000033">
    <property type="protein sequence ID" value="BAB95219.1"/>
    <property type="molecule type" value="Genomic_DNA"/>
</dbReference>
<dbReference type="RefSeq" id="WP_000245895.1">
    <property type="nucleotide sequence ID" value="NC_003923.1"/>
</dbReference>
<dbReference type="SMR" id="Q8NWN5"/>
<dbReference type="KEGG" id="sam:MW1354"/>
<dbReference type="HOGENOM" id="CLU_024321_0_1_9"/>
<dbReference type="UniPathway" id="UPA00053">
    <property type="reaction ID" value="UER00089"/>
</dbReference>
<dbReference type="GO" id="GO:0005737">
    <property type="term" value="C:cytoplasm"/>
    <property type="evidence" value="ECO:0007669"/>
    <property type="project" value="UniProtKB-SubCell"/>
</dbReference>
<dbReference type="GO" id="GO:0003866">
    <property type="term" value="F:3-phosphoshikimate 1-carboxyvinyltransferase activity"/>
    <property type="evidence" value="ECO:0007669"/>
    <property type="project" value="UniProtKB-UniRule"/>
</dbReference>
<dbReference type="GO" id="GO:0008652">
    <property type="term" value="P:amino acid biosynthetic process"/>
    <property type="evidence" value="ECO:0007669"/>
    <property type="project" value="UniProtKB-KW"/>
</dbReference>
<dbReference type="GO" id="GO:0009073">
    <property type="term" value="P:aromatic amino acid family biosynthetic process"/>
    <property type="evidence" value="ECO:0007669"/>
    <property type="project" value="UniProtKB-KW"/>
</dbReference>
<dbReference type="GO" id="GO:0009423">
    <property type="term" value="P:chorismate biosynthetic process"/>
    <property type="evidence" value="ECO:0007669"/>
    <property type="project" value="UniProtKB-UniRule"/>
</dbReference>
<dbReference type="CDD" id="cd01556">
    <property type="entry name" value="EPSP_synthase"/>
    <property type="match status" value="1"/>
</dbReference>
<dbReference type="FunFam" id="3.65.10.10:FF:000005">
    <property type="entry name" value="3-phosphoshikimate 1-carboxyvinyltransferase"/>
    <property type="match status" value="1"/>
</dbReference>
<dbReference type="FunFam" id="3.65.10.10:FF:000006">
    <property type="entry name" value="3-phosphoshikimate 1-carboxyvinyltransferase"/>
    <property type="match status" value="1"/>
</dbReference>
<dbReference type="Gene3D" id="3.65.10.10">
    <property type="entry name" value="Enolpyruvate transferase domain"/>
    <property type="match status" value="2"/>
</dbReference>
<dbReference type="HAMAP" id="MF_00210">
    <property type="entry name" value="EPSP_synth"/>
    <property type="match status" value="1"/>
</dbReference>
<dbReference type="InterPro" id="IPR001986">
    <property type="entry name" value="Enolpyruvate_Tfrase_dom"/>
</dbReference>
<dbReference type="InterPro" id="IPR036968">
    <property type="entry name" value="Enolpyruvate_Tfrase_sf"/>
</dbReference>
<dbReference type="InterPro" id="IPR006264">
    <property type="entry name" value="EPSP_synthase"/>
</dbReference>
<dbReference type="InterPro" id="IPR023193">
    <property type="entry name" value="EPSP_synthase_CS"/>
</dbReference>
<dbReference type="InterPro" id="IPR013792">
    <property type="entry name" value="RNA3'P_cycl/enolpyr_Trfase_a/b"/>
</dbReference>
<dbReference type="NCBIfam" id="TIGR01356">
    <property type="entry name" value="aroA"/>
    <property type="match status" value="1"/>
</dbReference>
<dbReference type="PANTHER" id="PTHR21090">
    <property type="entry name" value="AROM/DEHYDROQUINATE SYNTHASE"/>
    <property type="match status" value="1"/>
</dbReference>
<dbReference type="PANTHER" id="PTHR21090:SF5">
    <property type="entry name" value="PENTAFUNCTIONAL AROM POLYPEPTIDE"/>
    <property type="match status" value="1"/>
</dbReference>
<dbReference type="Pfam" id="PF00275">
    <property type="entry name" value="EPSP_synthase"/>
    <property type="match status" value="1"/>
</dbReference>
<dbReference type="PIRSF" id="PIRSF000505">
    <property type="entry name" value="EPSPS"/>
    <property type="match status" value="1"/>
</dbReference>
<dbReference type="SUPFAM" id="SSF55205">
    <property type="entry name" value="EPT/RTPC-like"/>
    <property type="match status" value="1"/>
</dbReference>
<dbReference type="PROSITE" id="PS00104">
    <property type="entry name" value="EPSP_SYNTHASE_1"/>
    <property type="match status" value="1"/>
</dbReference>
<dbReference type="PROSITE" id="PS00885">
    <property type="entry name" value="EPSP_SYNTHASE_2"/>
    <property type="match status" value="1"/>
</dbReference>
<proteinExistence type="inferred from homology"/>
<evidence type="ECO:0000255" key="1">
    <source>
        <dbReference type="HAMAP-Rule" id="MF_00210"/>
    </source>
</evidence>
<sequence>MVNEQIIDISGPLKGEIEVPGDKSMTHRAIMLASLAEGVSTIYKPLLGEDCRRTMDIFRLLGVEIKEDDEKLVVTSPGYQSFNTPHQVLYTGNSGTTTRLLAGLLSGLGIESVLSGDVSIGKRPMDRVLRPLKLMDANIEGIEDNYTPLIIKPSVIKGINYQMEVASAQVKSAILFASLFSKEPTIIKELDVSRNHTETMFKHFNIPIEAEGLSINTTPEAIRYIKPADFHVPGDISSAAFFIVAALITPGSDVTIHNVGINPTRSGIIDIVEKMGGNIQLFNQTTGAEPTASIRIQYTPMLQPITIEGELVPKAIDELPVIALLCTQAVGTSTIKDAEELKVKETNRIDTTADMLNLLGFELQPTNDGLIIHPSEFKTNATVDSLTDHRIGMMLAVASLLSSEPVKIKQFDAVNVSFPGFLPKLKLLENEG</sequence>
<accession>Q8NWN5</accession>
<gene>
    <name evidence="1" type="primary">aroA</name>
    <name type="ordered locus">MW1354</name>
</gene>
<protein>
    <recommendedName>
        <fullName evidence="1">3-phosphoshikimate 1-carboxyvinyltransferase</fullName>
        <ecNumber evidence="1">2.5.1.19</ecNumber>
    </recommendedName>
    <alternativeName>
        <fullName evidence="1">5-enolpyruvylshikimate-3-phosphate synthase</fullName>
        <shortName evidence="1">EPSP synthase</shortName>
        <shortName evidence="1">EPSPS</shortName>
    </alternativeName>
</protein>
<name>AROA_STAAW</name>
<reference key="1">
    <citation type="journal article" date="2002" name="Lancet">
        <title>Genome and virulence determinants of high virulence community-acquired MRSA.</title>
        <authorList>
            <person name="Baba T."/>
            <person name="Takeuchi F."/>
            <person name="Kuroda M."/>
            <person name="Yuzawa H."/>
            <person name="Aoki K."/>
            <person name="Oguchi A."/>
            <person name="Nagai Y."/>
            <person name="Iwama N."/>
            <person name="Asano K."/>
            <person name="Naimi T."/>
            <person name="Kuroda H."/>
            <person name="Cui L."/>
            <person name="Yamamoto K."/>
            <person name="Hiramatsu K."/>
        </authorList>
    </citation>
    <scope>NUCLEOTIDE SEQUENCE [LARGE SCALE GENOMIC DNA]</scope>
    <source>
        <strain>MW2</strain>
    </source>
</reference>